<keyword id="KW-0349">Heme</keyword>
<keyword id="KW-0376">Hydrogen peroxide</keyword>
<keyword id="KW-0408">Iron</keyword>
<keyword id="KW-0479">Metal-binding</keyword>
<keyword id="KW-0560">Oxidoreductase</keyword>
<keyword id="KW-0575">Peroxidase</keyword>
<name>KATG_RHILO</name>
<feature type="chain" id="PRO_0000354886" description="Catalase-peroxidase">
    <location>
        <begin position="1"/>
        <end position="732"/>
    </location>
</feature>
<feature type="region of interest" description="Disordered" evidence="2">
    <location>
        <begin position="1"/>
        <end position="24"/>
    </location>
</feature>
<feature type="active site" description="Proton acceptor" evidence="1">
    <location>
        <position position="97"/>
    </location>
</feature>
<feature type="binding site" description="axial binding residue" evidence="1">
    <location>
        <position position="260"/>
    </location>
    <ligand>
        <name>heme b</name>
        <dbReference type="ChEBI" id="CHEBI:60344"/>
    </ligand>
    <ligandPart>
        <name>Fe</name>
        <dbReference type="ChEBI" id="CHEBI:18248"/>
    </ligandPart>
</feature>
<feature type="site" description="Transition state stabilizer" evidence="1">
    <location>
        <position position="93"/>
    </location>
</feature>
<feature type="cross-link" description="Tryptophyl-tyrosyl-methioninium (Trp-Tyr) (with M-245)" evidence="1">
    <location>
        <begin position="96"/>
        <end position="219"/>
    </location>
</feature>
<feature type="cross-link" description="Tryptophyl-tyrosyl-methioninium (Tyr-Met) (with W-96)" evidence="1">
    <location>
        <begin position="219"/>
        <end position="245"/>
    </location>
</feature>
<proteinExistence type="inferred from homology"/>
<evidence type="ECO:0000255" key="1">
    <source>
        <dbReference type="HAMAP-Rule" id="MF_01961"/>
    </source>
</evidence>
<evidence type="ECO:0000256" key="2">
    <source>
        <dbReference type="SAM" id="MobiDB-lite"/>
    </source>
</evidence>
<evidence type="ECO:0000305" key="3"/>
<gene>
    <name evidence="1" type="primary">katG</name>
    <name type="ordered locus">mlr6940</name>
</gene>
<reference key="1">
    <citation type="journal article" date="2000" name="DNA Res.">
        <title>Complete genome structure of the nitrogen-fixing symbiotic bacterium Mesorhizobium loti.</title>
        <authorList>
            <person name="Kaneko T."/>
            <person name="Nakamura Y."/>
            <person name="Sato S."/>
            <person name="Asamizu E."/>
            <person name="Kato T."/>
            <person name="Sasamoto S."/>
            <person name="Watanabe A."/>
            <person name="Idesawa K."/>
            <person name="Ishikawa A."/>
            <person name="Kawashima K."/>
            <person name="Kimura T."/>
            <person name="Kishida Y."/>
            <person name="Kiyokawa C."/>
            <person name="Kohara M."/>
            <person name="Matsumoto M."/>
            <person name="Matsuno A."/>
            <person name="Mochizuki Y."/>
            <person name="Nakayama S."/>
            <person name="Nakazaki N."/>
            <person name="Shimpo S."/>
            <person name="Sugimoto M."/>
            <person name="Takeuchi C."/>
            <person name="Yamada M."/>
            <person name="Tabata S."/>
        </authorList>
    </citation>
    <scope>NUCLEOTIDE SEQUENCE [LARGE SCALE GENOMIC DNA]</scope>
    <source>
        <strain>LMG 29417 / CECT 9101 / MAFF 303099</strain>
    </source>
</reference>
<organism>
    <name type="scientific">Mesorhizobium japonicum (strain LMG 29417 / CECT 9101 / MAFF 303099)</name>
    <name type="common">Mesorhizobium loti (strain MAFF 303099)</name>
    <dbReference type="NCBI Taxonomy" id="266835"/>
    <lineage>
        <taxon>Bacteria</taxon>
        <taxon>Pseudomonadati</taxon>
        <taxon>Pseudomonadota</taxon>
        <taxon>Alphaproteobacteria</taxon>
        <taxon>Hyphomicrobiales</taxon>
        <taxon>Phyllobacteriaceae</taxon>
        <taxon>Mesorhizobium</taxon>
    </lineage>
</organism>
<dbReference type="EC" id="1.11.1.21" evidence="1"/>
<dbReference type="EMBL" id="BA000012">
    <property type="protein sequence ID" value="BAB53130.1"/>
    <property type="status" value="ALT_INIT"/>
    <property type="molecule type" value="Genomic_DNA"/>
</dbReference>
<dbReference type="RefSeq" id="WP_032929051.1">
    <property type="nucleotide sequence ID" value="NC_002678.2"/>
</dbReference>
<dbReference type="SMR" id="Q987S0"/>
<dbReference type="PeroxiBase" id="2352">
    <property type="entry name" value="MloCP01"/>
</dbReference>
<dbReference type="GeneID" id="66685656"/>
<dbReference type="KEGG" id="mlo:mlr6940"/>
<dbReference type="eggNOG" id="COG0376">
    <property type="taxonomic scope" value="Bacteria"/>
</dbReference>
<dbReference type="HOGENOM" id="CLU_025424_2_0_5"/>
<dbReference type="Proteomes" id="UP000000552">
    <property type="component" value="Chromosome"/>
</dbReference>
<dbReference type="GO" id="GO:0005829">
    <property type="term" value="C:cytosol"/>
    <property type="evidence" value="ECO:0007669"/>
    <property type="project" value="TreeGrafter"/>
</dbReference>
<dbReference type="GO" id="GO:0004096">
    <property type="term" value="F:catalase activity"/>
    <property type="evidence" value="ECO:0007669"/>
    <property type="project" value="UniProtKB-UniRule"/>
</dbReference>
<dbReference type="GO" id="GO:0020037">
    <property type="term" value="F:heme binding"/>
    <property type="evidence" value="ECO:0007669"/>
    <property type="project" value="InterPro"/>
</dbReference>
<dbReference type="GO" id="GO:0046872">
    <property type="term" value="F:metal ion binding"/>
    <property type="evidence" value="ECO:0007669"/>
    <property type="project" value="UniProtKB-KW"/>
</dbReference>
<dbReference type="GO" id="GO:0070301">
    <property type="term" value="P:cellular response to hydrogen peroxide"/>
    <property type="evidence" value="ECO:0007669"/>
    <property type="project" value="TreeGrafter"/>
</dbReference>
<dbReference type="GO" id="GO:0042744">
    <property type="term" value="P:hydrogen peroxide catabolic process"/>
    <property type="evidence" value="ECO:0007669"/>
    <property type="project" value="UniProtKB-KW"/>
</dbReference>
<dbReference type="CDD" id="cd00649">
    <property type="entry name" value="catalase_peroxidase_1"/>
    <property type="match status" value="1"/>
</dbReference>
<dbReference type="CDD" id="cd08200">
    <property type="entry name" value="catalase_peroxidase_2"/>
    <property type="match status" value="1"/>
</dbReference>
<dbReference type="FunFam" id="1.10.420.10:FF:000002">
    <property type="entry name" value="Catalase-peroxidase"/>
    <property type="match status" value="1"/>
</dbReference>
<dbReference type="FunFam" id="1.10.420.10:FF:000004">
    <property type="entry name" value="Catalase-peroxidase"/>
    <property type="match status" value="1"/>
</dbReference>
<dbReference type="FunFam" id="1.10.520.10:FF:000002">
    <property type="entry name" value="Catalase-peroxidase"/>
    <property type="match status" value="1"/>
</dbReference>
<dbReference type="Gene3D" id="1.10.520.10">
    <property type="match status" value="2"/>
</dbReference>
<dbReference type="Gene3D" id="1.10.420.10">
    <property type="entry name" value="Peroxidase, domain 2"/>
    <property type="match status" value="2"/>
</dbReference>
<dbReference type="HAMAP" id="MF_01961">
    <property type="entry name" value="Catal_peroxid"/>
    <property type="match status" value="1"/>
</dbReference>
<dbReference type="InterPro" id="IPR000763">
    <property type="entry name" value="Catalase_peroxidase"/>
</dbReference>
<dbReference type="InterPro" id="IPR002016">
    <property type="entry name" value="Haem_peroxidase"/>
</dbReference>
<dbReference type="InterPro" id="IPR010255">
    <property type="entry name" value="Haem_peroxidase_sf"/>
</dbReference>
<dbReference type="InterPro" id="IPR019794">
    <property type="entry name" value="Peroxidases_AS"/>
</dbReference>
<dbReference type="InterPro" id="IPR019793">
    <property type="entry name" value="Peroxidases_heam-ligand_BS"/>
</dbReference>
<dbReference type="NCBIfam" id="TIGR00198">
    <property type="entry name" value="cat_per_HPI"/>
    <property type="match status" value="1"/>
</dbReference>
<dbReference type="NCBIfam" id="NF011635">
    <property type="entry name" value="PRK15061.1"/>
    <property type="match status" value="1"/>
</dbReference>
<dbReference type="PANTHER" id="PTHR30555:SF0">
    <property type="entry name" value="CATALASE-PEROXIDASE"/>
    <property type="match status" value="1"/>
</dbReference>
<dbReference type="PANTHER" id="PTHR30555">
    <property type="entry name" value="HYDROPEROXIDASE I, BIFUNCTIONAL CATALASE-PEROXIDASE"/>
    <property type="match status" value="1"/>
</dbReference>
<dbReference type="Pfam" id="PF00141">
    <property type="entry name" value="peroxidase"/>
    <property type="match status" value="2"/>
</dbReference>
<dbReference type="PRINTS" id="PR00460">
    <property type="entry name" value="BPEROXIDASE"/>
</dbReference>
<dbReference type="PRINTS" id="PR00458">
    <property type="entry name" value="PEROXIDASE"/>
</dbReference>
<dbReference type="SUPFAM" id="SSF48113">
    <property type="entry name" value="Heme-dependent peroxidases"/>
    <property type="match status" value="2"/>
</dbReference>
<dbReference type="PROSITE" id="PS00435">
    <property type="entry name" value="PEROXIDASE_1"/>
    <property type="match status" value="1"/>
</dbReference>
<dbReference type="PROSITE" id="PS00436">
    <property type="entry name" value="PEROXIDASE_2"/>
    <property type="match status" value="1"/>
</dbReference>
<dbReference type="PROSITE" id="PS50873">
    <property type="entry name" value="PEROXIDASE_4"/>
    <property type="match status" value="1"/>
</dbReference>
<protein>
    <recommendedName>
        <fullName evidence="1">Catalase-peroxidase</fullName>
        <shortName evidence="1">CP</shortName>
        <ecNumber evidence="1">1.11.1.21</ecNumber>
    </recommendedName>
    <alternativeName>
        <fullName evidence="1">Peroxidase/catalase</fullName>
    </alternativeName>
</protein>
<accession>Q987S0</accession>
<comment type="function">
    <text evidence="1">Bifunctional enzyme with both catalase and broad-spectrum peroxidase activity.</text>
</comment>
<comment type="catalytic activity">
    <reaction evidence="1">
        <text>H2O2 + AH2 = A + 2 H2O</text>
        <dbReference type="Rhea" id="RHEA:30275"/>
        <dbReference type="ChEBI" id="CHEBI:13193"/>
        <dbReference type="ChEBI" id="CHEBI:15377"/>
        <dbReference type="ChEBI" id="CHEBI:16240"/>
        <dbReference type="ChEBI" id="CHEBI:17499"/>
        <dbReference type="EC" id="1.11.1.21"/>
    </reaction>
</comment>
<comment type="catalytic activity">
    <reaction evidence="1">
        <text>2 H2O2 = O2 + 2 H2O</text>
        <dbReference type="Rhea" id="RHEA:20309"/>
        <dbReference type="ChEBI" id="CHEBI:15377"/>
        <dbReference type="ChEBI" id="CHEBI:15379"/>
        <dbReference type="ChEBI" id="CHEBI:16240"/>
        <dbReference type="EC" id="1.11.1.21"/>
    </reaction>
</comment>
<comment type="cofactor">
    <cofactor evidence="1">
        <name>heme b</name>
        <dbReference type="ChEBI" id="CHEBI:60344"/>
    </cofactor>
    <text evidence="1">Binds 1 heme b (iron(II)-protoporphyrin IX) group per dimer.</text>
</comment>
<comment type="subunit">
    <text evidence="1">Homodimer or homotetramer.</text>
</comment>
<comment type="PTM">
    <text evidence="1">Formation of the three residue Trp-Tyr-Met cross-link is important for the catalase, but not the peroxidase activity of the enzyme.</text>
</comment>
<comment type="similarity">
    <text evidence="1">Belongs to the peroxidase family. Peroxidase/catalase subfamily.</text>
</comment>
<comment type="sequence caution" evidence="3">
    <conflict type="erroneous initiation">
        <sequence resource="EMBL-CDS" id="BAB53130"/>
    </conflict>
</comment>
<sequence length="732" mass="79645">MDAKTDDNSAGKCPVAHGSAGRTNRDWWPNQLNVQILHQQSSLSDPMGEAFDYAEEFKSLDLDAVIKDLHALMTDSQEWWPADFGHYGPLFIRMAWHSAGTYRIADGRGGAGAGQQRFAPLNSWPDNVNLDKARRLLWPIKQKYGRKISWADLLILTGNVALESMGFKTFGFAGGRADVWEPEQDVYWGPEGKWLADERYSGDRDLQNPLGAVQMGLIYVNPEGPNGNPDPLAAARDIRDTFARMAMNDEETVALIAGGHTFGKTHGAGDASLVGVEPEGADIEQQGLGWASKFGTGKGGDAIGSGLEVIWTTTPTKWSNNFFDNLFGFDWELTKSPAGAHQWTPKGGAGAGTVPDAHNSAKRHAPSMLTTDLALRFDPSYATISKRFHENPDQFADAFARAWYKLTHRDMGPVARYLGPLVPKEELPWQDVIPVVDHVLIDEQDAEALKAEILASGLSVSQLVSTAWASASTFRGSDKRGGANGARIRLSPQKDWAVNQPAELAKVLDKLQAIAKDFNAAQTGSKKVSLADLIVLGGNAGIEKAAKAAGHSVDVPFWPGRMDASQEQTDIHSFAPLEPTVDGFRNYVSGKQRLTVEEALVDRAQLLTLTAPELTVLVGGLRVLGANAGQSKHGVFTKQPETLSNDFFVNLLDMGTEWKATSDAKDVFEGRDRKTGEVKWTGTRADLIFGSHSQLRALAEVYATADAKAKFAKDFVVAWTKVMNADRFDIAG</sequence>